<proteinExistence type="inferred from homology"/>
<keyword id="KW-0997">Cell inner membrane</keyword>
<keyword id="KW-1003">Cell membrane</keyword>
<keyword id="KW-0444">Lipid biosynthesis</keyword>
<keyword id="KW-0443">Lipid metabolism</keyword>
<keyword id="KW-0472">Membrane</keyword>
<keyword id="KW-0594">Phospholipid biosynthesis</keyword>
<keyword id="KW-1208">Phospholipid metabolism</keyword>
<keyword id="KW-0808">Transferase</keyword>
<keyword id="KW-0812">Transmembrane</keyword>
<keyword id="KW-1133">Transmembrane helix</keyword>
<comment type="function">
    <text evidence="1">Catalyzes the transfer of an acyl group from acyl-ACP to glycerol-3-phosphate (G3P) to form lysophosphatidic acid (LPA). This enzyme can also utilize acyl-CoA as fatty acyl donor, but not acyl-PO(4).</text>
</comment>
<comment type="catalytic activity">
    <reaction evidence="1">
        <text>sn-glycerol 3-phosphate + an acyl-CoA = a 1-acyl-sn-glycero-3-phosphate + CoA</text>
        <dbReference type="Rhea" id="RHEA:15325"/>
        <dbReference type="ChEBI" id="CHEBI:57287"/>
        <dbReference type="ChEBI" id="CHEBI:57597"/>
        <dbReference type="ChEBI" id="CHEBI:57970"/>
        <dbReference type="ChEBI" id="CHEBI:58342"/>
        <dbReference type="EC" id="2.3.1.15"/>
    </reaction>
</comment>
<comment type="catalytic activity">
    <reaction evidence="1">
        <text>a fatty acyl-[ACP] + sn-glycerol 3-phosphate = a 1-acyl-sn-glycero-3-phosphate + holo-[ACP]</text>
        <dbReference type="Rhea" id="RHEA:42300"/>
        <dbReference type="Rhea" id="RHEA-COMP:9685"/>
        <dbReference type="Rhea" id="RHEA-COMP:14125"/>
        <dbReference type="ChEBI" id="CHEBI:57597"/>
        <dbReference type="ChEBI" id="CHEBI:57970"/>
        <dbReference type="ChEBI" id="CHEBI:64479"/>
        <dbReference type="ChEBI" id="CHEBI:138651"/>
        <dbReference type="EC" id="2.3.1.n5"/>
    </reaction>
</comment>
<comment type="pathway">
    <text evidence="1">Lipid metabolism; phospholipid metabolism.</text>
</comment>
<comment type="subunit">
    <text evidence="1">Probably interacts with PlsX.</text>
</comment>
<comment type="subcellular location">
    <subcellularLocation>
        <location evidence="1">Cell inner membrane</location>
        <topology evidence="1">Multi-pass membrane protein</topology>
    </subcellularLocation>
</comment>
<comment type="similarity">
    <text evidence="1">Belongs to the PlsY family.</text>
</comment>
<organism>
    <name type="scientific">Escherichia coli O7:K1 (strain IAI39 / ExPEC)</name>
    <dbReference type="NCBI Taxonomy" id="585057"/>
    <lineage>
        <taxon>Bacteria</taxon>
        <taxon>Pseudomonadati</taxon>
        <taxon>Pseudomonadota</taxon>
        <taxon>Gammaproteobacteria</taxon>
        <taxon>Enterobacterales</taxon>
        <taxon>Enterobacteriaceae</taxon>
        <taxon>Escherichia</taxon>
    </lineage>
</organism>
<accession>B7NJS2</accession>
<sequence length="205" mass="22193">MSAIAPGMILIAYLCGSISSAILVCRLCGLPDPRTSGSGNPGATNVLRIGGKGAAVAVLIFDVLKGMLPVWGAYELGVSPFWLGLIAIAACLGHIWPVFFGFKGGKGVATAFGAIAPIGWDLTGVMAGTWLLTVLLSGYSSLGAIVSALIAPFYVWWFKPQFTFPVSMLSCLILLRHHDNIQRLWRRQETKIWTKFKRKREKDPE</sequence>
<reference key="1">
    <citation type="journal article" date="2009" name="PLoS Genet.">
        <title>Organised genome dynamics in the Escherichia coli species results in highly diverse adaptive paths.</title>
        <authorList>
            <person name="Touchon M."/>
            <person name="Hoede C."/>
            <person name="Tenaillon O."/>
            <person name="Barbe V."/>
            <person name="Baeriswyl S."/>
            <person name="Bidet P."/>
            <person name="Bingen E."/>
            <person name="Bonacorsi S."/>
            <person name="Bouchier C."/>
            <person name="Bouvet O."/>
            <person name="Calteau A."/>
            <person name="Chiapello H."/>
            <person name="Clermont O."/>
            <person name="Cruveiller S."/>
            <person name="Danchin A."/>
            <person name="Diard M."/>
            <person name="Dossat C."/>
            <person name="Karoui M.E."/>
            <person name="Frapy E."/>
            <person name="Garry L."/>
            <person name="Ghigo J.M."/>
            <person name="Gilles A.M."/>
            <person name="Johnson J."/>
            <person name="Le Bouguenec C."/>
            <person name="Lescat M."/>
            <person name="Mangenot S."/>
            <person name="Martinez-Jehanne V."/>
            <person name="Matic I."/>
            <person name="Nassif X."/>
            <person name="Oztas S."/>
            <person name="Petit M.A."/>
            <person name="Pichon C."/>
            <person name="Rouy Z."/>
            <person name="Ruf C.S."/>
            <person name="Schneider D."/>
            <person name="Tourret J."/>
            <person name="Vacherie B."/>
            <person name="Vallenet D."/>
            <person name="Medigue C."/>
            <person name="Rocha E.P.C."/>
            <person name="Denamur E."/>
        </authorList>
    </citation>
    <scope>NUCLEOTIDE SEQUENCE [LARGE SCALE GENOMIC DNA]</scope>
    <source>
        <strain>IAI39 / ExPEC</strain>
    </source>
</reference>
<dbReference type="EC" id="2.3.1.15" evidence="1"/>
<dbReference type="EC" id="2.3.1.n5" evidence="1"/>
<dbReference type="EMBL" id="CU928164">
    <property type="protein sequence ID" value="CAR19671.1"/>
    <property type="molecule type" value="Genomic_DNA"/>
</dbReference>
<dbReference type="RefSeq" id="WP_001272796.1">
    <property type="nucleotide sequence ID" value="NC_011750.1"/>
</dbReference>
<dbReference type="RefSeq" id="YP_002409459.1">
    <property type="nucleotide sequence ID" value="NC_011750.1"/>
</dbReference>
<dbReference type="SMR" id="B7NJS2"/>
<dbReference type="STRING" id="585057.ECIAI39_3555"/>
<dbReference type="GeneID" id="93778934"/>
<dbReference type="KEGG" id="ect:ECIAI39_3555"/>
<dbReference type="PATRIC" id="fig|585057.6.peg.3683"/>
<dbReference type="HOGENOM" id="CLU_081254_0_2_6"/>
<dbReference type="UniPathway" id="UPA00085"/>
<dbReference type="Proteomes" id="UP000000749">
    <property type="component" value="Chromosome"/>
</dbReference>
<dbReference type="GO" id="GO:0005886">
    <property type="term" value="C:plasma membrane"/>
    <property type="evidence" value="ECO:0007669"/>
    <property type="project" value="UniProtKB-SubCell"/>
</dbReference>
<dbReference type="GO" id="GO:0043772">
    <property type="term" value="F:acyl-phosphate glycerol-3-phosphate acyltransferase activity"/>
    <property type="evidence" value="ECO:0007669"/>
    <property type="project" value="InterPro"/>
</dbReference>
<dbReference type="GO" id="GO:0004366">
    <property type="term" value="F:glycerol-3-phosphate O-acyltransferase activity"/>
    <property type="evidence" value="ECO:0007669"/>
    <property type="project" value="UniProtKB-UniRule"/>
</dbReference>
<dbReference type="GO" id="GO:0008654">
    <property type="term" value="P:phospholipid biosynthetic process"/>
    <property type="evidence" value="ECO:0007669"/>
    <property type="project" value="UniProtKB-UniRule"/>
</dbReference>
<dbReference type="HAMAP" id="MF_01043">
    <property type="entry name" value="PlsY"/>
    <property type="match status" value="1"/>
</dbReference>
<dbReference type="InterPro" id="IPR003811">
    <property type="entry name" value="G3P_acylTferase_PlsY"/>
</dbReference>
<dbReference type="NCBIfam" id="TIGR00023">
    <property type="entry name" value="glycerol-3-phosphate 1-O-acyltransferase PlsY"/>
    <property type="match status" value="1"/>
</dbReference>
<dbReference type="PANTHER" id="PTHR30309:SF0">
    <property type="entry name" value="GLYCEROL-3-PHOSPHATE ACYLTRANSFERASE-RELATED"/>
    <property type="match status" value="1"/>
</dbReference>
<dbReference type="PANTHER" id="PTHR30309">
    <property type="entry name" value="INNER MEMBRANE PROTEIN YGIH"/>
    <property type="match status" value="1"/>
</dbReference>
<dbReference type="Pfam" id="PF02660">
    <property type="entry name" value="G3P_acyltransf"/>
    <property type="match status" value="1"/>
</dbReference>
<dbReference type="SMART" id="SM01207">
    <property type="entry name" value="G3P_acyltransf"/>
    <property type="match status" value="1"/>
</dbReference>
<evidence type="ECO:0000255" key="1">
    <source>
        <dbReference type="HAMAP-Rule" id="MF_01043"/>
    </source>
</evidence>
<feature type="chain" id="PRO_1000136083" description="Glycerol-3-phosphate acyltransferase">
    <location>
        <begin position="1"/>
        <end position="205"/>
    </location>
</feature>
<feature type="topological domain" description="Periplasmic" evidence="1">
    <location>
        <begin position="1"/>
        <end position="3"/>
    </location>
</feature>
<feature type="transmembrane region" description="Helical" evidence="1">
    <location>
        <begin position="4"/>
        <end position="24"/>
    </location>
</feature>
<feature type="topological domain" description="Cytoplasmic" evidence="1">
    <location>
        <begin position="25"/>
        <end position="52"/>
    </location>
</feature>
<feature type="transmembrane region" description="Helical" evidence="1">
    <location>
        <begin position="53"/>
        <end position="73"/>
    </location>
</feature>
<feature type="topological domain" description="Periplasmic" evidence="1">
    <location>
        <begin position="74"/>
        <end position="80"/>
    </location>
</feature>
<feature type="transmembrane region" description="Helical" evidence="1">
    <location>
        <begin position="81"/>
        <end position="101"/>
    </location>
</feature>
<feature type="topological domain" description="Cytoplasmic" evidence="1">
    <location>
        <begin position="102"/>
        <end position="111"/>
    </location>
</feature>
<feature type="transmembrane region" description="Helical" evidence="1">
    <location>
        <begin position="112"/>
        <end position="132"/>
    </location>
</feature>
<feature type="topological domain" description="Periplasmic" evidence="1">
    <location>
        <begin position="133"/>
        <end position="137"/>
    </location>
</feature>
<feature type="transmembrane region" description="Helical" evidence="1">
    <location>
        <begin position="138"/>
        <end position="158"/>
    </location>
</feature>
<feature type="topological domain" description="Cytoplasmic" evidence="1">
    <location>
        <begin position="159"/>
        <end position="205"/>
    </location>
</feature>
<name>PLSY_ECO7I</name>
<gene>
    <name evidence="1" type="primary">plsY</name>
    <name type="synonym">ygiH</name>
    <name type="ordered locus">ECIAI39_3555</name>
</gene>
<protein>
    <recommendedName>
        <fullName evidence="1">Glycerol-3-phosphate acyltransferase</fullName>
    </recommendedName>
    <alternativeName>
        <fullName evidence="1">G3P acyltransferase</fullName>
        <shortName evidence="1">GPAT</shortName>
        <ecNumber evidence="1">2.3.1.15</ecNumber>
        <ecNumber evidence="1">2.3.1.n5</ecNumber>
    </alternativeName>
    <alternativeName>
        <fullName evidence="1">Lysophosphatidic acid synthase</fullName>
        <shortName evidence="1">LPA synthase</shortName>
    </alternativeName>
</protein>